<name>PGPS1_SCHPO</name>
<evidence type="ECO:0000250" key="1"/>
<evidence type="ECO:0000255" key="2"/>
<evidence type="ECO:0000305" key="3"/>
<dbReference type="EC" id="2.7.8.5"/>
<dbReference type="EMBL" id="CU329671">
    <property type="protein sequence ID" value="CAC21490.2"/>
    <property type="molecule type" value="Genomic_DNA"/>
</dbReference>
<dbReference type="RefSeq" id="NP_595992.2">
    <property type="nucleotide sequence ID" value="NM_001021899.2"/>
</dbReference>
<dbReference type="SMR" id="Q9HDW1"/>
<dbReference type="BioGRID" id="277757">
    <property type="interactions" value="1"/>
</dbReference>
<dbReference type="FunCoup" id="Q9HDW1">
    <property type="interactions" value="701"/>
</dbReference>
<dbReference type="STRING" id="284812.Q9HDW1"/>
<dbReference type="PaxDb" id="4896-SPBP18G5.02.1"/>
<dbReference type="EnsemblFungi" id="SPBP18G5.02.1">
    <property type="protein sequence ID" value="SPBP18G5.02.1:pep"/>
    <property type="gene ID" value="SPBP18G5.02"/>
</dbReference>
<dbReference type="GeneID" id="2541243"/>
<dbReference type="KEGG" id="spo:2541243"/>
<dbReference type="PomBase" id="SPBP18G5.02">
    <property type="gene designation" value="pgs1"/>
</dbReference>
<dbReference type="VEuPathDB" id="FungiDB:SPBP18G5.02"/>
<dbReference type="eggNOG" id="KOG3964">
    <property type="taxonomic scope" value="Eukaryota"/>
</dbReference>
<dbReference type="HOGENOM" id="CLU_030471_1_2_1"/>
<dbReference type="InParanoid" id="Q9HDW1"/>
<dbReference type="OMA" id="HKCLAQC"/>
<dbReference type="UniPathway" id="UPA00084">
    <property type="reaction ID" value="UER00503"/>
</dbReference>
<dbReference type="PRO" id="PR:Q9HDW1"/>
<dbReference type="Proteomes" id="UP000002485">
    <property type="component" value="Chromosome II"/>
</dbReference>
<dbReference type="GO" id="GO:0005759">
    <property type="term" value="C:mitochondrial matrix"/>
    <property type="evidence" value="ECO:0000305"/>
    <property type="project" value="PomBase"/>
</dbReference>
<dbReference type="GO" id="GO:0031966">
    <property type="term" value="C:mitochondrial membrane"/>
    <property type="evidence" value="ECO:0000314"/>
    <property type="project" value="PomBase"/>
</dbReference>
<dbReference type="GO" id="GO:0005739">
    <property type="term" value="C:mitochondrion"/>
    <property type="evidence" value="ECO:0000318"/>
    <property type="project" value="GO_Central"/>
</dbReference>
<dbReference type="GO" id="GO:0005524">
    <property type="term" value="F:ATP binding"/>
    <property type="evidence" value="ECO:0007669"/>
    <property type="project" value="UniProtKB-KW"/>
</dbReference>
<dbReference type="GO" id="GO:0008444">
    <property type="term" value="F:CDP-diacylglycerol-glycerol-3-phosphate 3-phosphatidyltransferase activity"/>
    <property type="evidence" value="ECO:0000314"/>
    <property type="project" value="PomBase"/>
</dbReference>
<dbReference type="GO" id="GO:0032049">
    <property type="term" value="P:cardiolipin biosynthetic process"/>
    <property type="evidence" value="ECO:0000314"/>
    <property type="project" value="PomBase"/>
</dbReference>
<dbReference type="GO" id="GO:0016024">
    <property type="term" value="P:CDP-diacylglycerol biosynthetic process"/>
    <property type="evidence" value="ECO:0000269"/>
    <property type="project" value="PomBase"/>
</dbReference>
<dbReference type="GO" id="GO:0007006">
    <property type="term" value="P:mitochondrial membrane organization"/>
    <property type="evidence" value="ECO:0000305"/>
    <property type="project" value="PomBase"/>
</dbReference>
<dbReference type="CDD" id="cd09135">
    <property type="entry name" value="PLDc_PGS1_euk_1"/>
    <property type="match status" value="1"/>
</dbReference>
<dbReference type="CDD" id="cd09137">
    <property type="entry name" value="PLDc_PGS1_euk_2"/>
    <property type="match status" value="1"/>
</dbReference>
<dbReference type="FunFam" id="3.30.870.10:FF:000044">
    <property type="entry name" value="CDP-diacylglycerol--glycerol-3-phosphate 3-phosphatidyltransferase"/>
    <property type="match status" value="1"/>
</dbReference>
<dbReference type="FunFam" id="3.30.870.10:FF:000046">
    <property type="entry name" value="CDP-diacylglycerol--glycerol-3-phosphate 3-phosphatidyltransferase"/>
    <property type="match status" value="1"/>
</dbReference>
<dbReference type="Gene3D" id="3.30.870.10">
    <property type="entry name" value="Endonuclease Chain A"/>
    <property type="match status" value="2"/>
</dbReference>
<dbReference type="InterPro" id="IPR016270">
    <property type="entry name" value="PGS1"/>
</dbReference>
<dbReference type="InterPro" id="IPR001736">
    <property type="entry name" value="PLipase_D/transphosphatidylase"/>
</dbReference>
<dbReference type="PANTHER" id="PTHR12586:SF1">
    <property type="entry name" value="CDP-DIACYLGLYCEROL--GLYCEROL-3-PHOSPHATE 3-PHOSPHATIDYLTRANSFERASE, MITOCHONDRIAL"/>
    <property type="match status" value="1"/>
</dbReference>
<dbReference type="PANTHER" id="PTHR12586">
    <property type="entry name" value="CDP-DIACYLGLYCEROL--SERINE O-PHOSPHATIDYLTRANSFERASE"/>
    <property type="match status" value="1"/>
</dbReference>
<dbReference type="PIRSF" id="PIRSF000850">
    <property type="entry name" value="Phospholipase_D_PSS"/>
    <property type="match status" value="1"/>
</dbReference>
<dbReference type="SMART" id="SM00155">
    <property type="entry name" value="PLDc"/>
    <property type="match status" value="2"/>
</dbReference>
<dbReference type="SUPFAM" id="SSF56024">
    <property type="entry name" value="Phospholipase D/nuclease"/>
    <property type="match status" value="1"/>
</dbReference>
<feature type="chain" id="PRO_0000350817" description="CDP-diacylglycerol--glycerol-3-phosphate 3-phosphatidyltransferase">
    <location>
        <begin position="1"/>
        <end position="502"/>
    </location>
</feature>
<feature type="domain" description="PLD phosphodiesterase 1">
    <location>
        <begin position="143"/>
        <end position="169"/>
    </location>
</feature>
<feature type="domain" description="PLD phosphodiesterase 2">
    <location>
        <begin position="410"/>
        <end position="443"/>
    </location>
</feature>
<feature type="active site" evidence="2">
    <location>
        <position position="148"/>
    </location>
</feature>
<feature type="active site" evidence="2">
    <location>
        <position position="150"/>
    </location>
</feature>
<feature type="active site" evidence="2">
    <location>
        <position position="155"/>
    </location>
</feature>
<feature type="binding site" evidence="2">
    <location>
        <begin position="58"/>
        <end position="65"/>
    </location>
    <ligand>
        <name>ATP</name>
        <dbReference type="ChEBI" id="CHEBI:30616"/>
    </ligand>
</feature>
<protein>
    <recommendedName>
        <fullName>CDP-diacylglycerol--glycerol-3-phosphate 3-phosphatidyltransferase</fullName>
        <ecNumber>2.7.8.5</ecNumber>
    </recommendedName>
    <alternativeName>
        <fullName>Phosphatidylglycerophosphate synthase</fullName>
        <shortName>PGP synthase</shortName>
    </alternativeName>
</protein>
<gene>
    <name type="primary">pgs1</name>
    <name type="ORF">SPBP18G5.02</name>
</gene>
<comment type="function">
    <text evidence="1">Functions in the biosynthesis of the anionic phospholipids phosphatidylglycerol and cardiolipin.</text>
</comment>
<comment type="catalytic activity">
    <reaction>
        <text>a CDP-1,2-diacyl-sn-glycerol + sn-glycerol 3-phosphate = a 1,2-diacyl-sn-glycero-3-phospho-(1'-sn-glycero-3'-phosphate) + CMP + H(+)</text>
        <dbReference type="Rhea" id="RHEA:12593"/>
        <dbReference type="ChEBI" id="CHEBI:15378"/>
        <dbReference type="ChEBI" id="CHEBI:57597"/>
        <dbReference type="ChEBI" id="CHEBI:58332"/>
        <dbReference type="ChEBI" id="CHEBI:60110"/>
        <dbReference type="ChEBI" id="CHEBI:60377"/>
        <dbReference type="EC" id="2.7.8.5"/>
    </reaction>
</comment>
<comment type="pathway">
    <text>Phospholipid metabolism; phosphatidylglycerol biosynthesis; phosphatidylglycerol from CDP-diacylglycerol: step 1/2.</text>
</comment>
<comment type="subcellular location">
    <subcellularLocation>
        <location evidence="1">Mitochondrion</location>
    </subcellularLocation>
</comment>
<comment type="similarity">
    <text evidence="3">Belongs to the CDP-alcohol phosphatidyltransferase class-II family.</text>
</comment>
<keyword id="KW-0067">ATP-binding</keyword>
<keyword id="KW-0444">Lipid biosynthesis</keyword>
<keyword id="KW-0443">Lipid metabolism</keyword>
<keyword id="KW-0496">Mitochondrion</keyword>
<keyword id="KW-0547">Nucleotide-binding</keyword>
<keyword id="KW-0594">Phospholipid biosynthesis</keyword>
<keyword id="KW-1208">Phospholipid metabolism</keyword>
<keyword id="KW-0597">Phosphoprotein</keyword>
<keyword id="KW-1185">Reference proteome</keyword>
<keyword id="KW-0677">Repeat</keyword>
<keyword id="KW-0808">Transferase</keyword>
<sequence>MDEGIEKNIFVNLESQIDGVCPKFYVNVDDIDIIHEPPEFYQRLKKLIKKAQKRIFLSTLYIGKEERELINCLSNALSNNPSLHVHILADQLRCTRESPGCCSASLLMQLKKKFPDRCEIKLYHTPNLRGLRKQLVPHRFNEGWGLQHMKIYGADDNLIISGANLSRDYFTNRKDRYYLFSDKGLADFFFKTHFLFSQLSFECIPHLSDSSIQLSSTSPVIPFTLKWNNSCPNPLTNPQEFRVAASAKIQQLLQGNREKFLSRNPSKPLSSVYGSELINQAGDDNNKPFHKYEESAIVYPLFQCVPILTSDVHSTEEKVLSIIGTLLSRKEVNWTLTAGYFNVYPALRKQLLKSEGIGEVIVASQQANGFYRSPGPSKLIPPAYQYIAEQFLKDSRKKKRNIDVLQWQNKGNTYHAKGFWLSTQHHKHPFLTTIGSSNYTSRSQQLDLESTLVVMTQNEKLKRKFSTEIELIKQHTKPMNTCQLEKVPMYVKALTSLMKKKL</sequence>
<reference key="1">
    <citation type="journal article" date="2002" name="Nature">
        <title>The genome sequence of Schizosaccharomyces pombe.</title>
        <authorList>
            <person name="Wood V."/>
            <person name="Gwilliam R."/>
            <person name="Rajandream M.A."/>
            <person name="Lyne M.H."/>
            <person name="Lyne R."/>
            <person name="Stewart A."/>
            <person name="Sgouros J.G."/>
            <person name="Peat N."/>
            <person name="Hayles J."/>
            <person name="Baker S.G."/>
            <person name="Basham D."/>
            <person name="Bowman S."/>
            <person name="Brooks K."/>
            <person name="Brown D."/>
            <person name="Brown S."/>
            <person name="Chillingworth T."/>
            <person name="Churcher C.M."/>
            <person name="Collins M."/>
            <person name="Connor R."/>
            <person name="Cronin A."/>
            <person name="Davis P."/>
            <person name="Feltwell T."/>
            <person name="Fraser A."/>
            <person name="Gentles S."/>
            <person name="Goble A."/>
            <person name="Hamlin N."/>
            <person name="Harris D.E."/>
            <person name="Hidalgo J."/>
            <person name="Hodgson G."/>
            <person name="Holroyd S."/>
            <person name="Hornsby T."/>
            <person name="Howarth S."/>
            <person name="Huckle E.J."/>
            <person name="Hunt S."/>
            <person name="Jagels K."/>
            <person name="James K.D."/>
            <person name="Jones L."/>
            <person name="Jones M."/>
            <person name="Leather S."/>
            <person name="McDonald S."/>
            <person name="McLean J."/>
            <person name="Mooney P."/>
            <person name="Moule S."/>
            <person name="Mungall K.L."/>
            <person name="Murphy L.D."/>
            <person name="Niblett D."/>
            <person name="Odell C."/>
            <person name="Oliver K."/>
            <person name="O'Neil S."/>
            <person name="Pearson D."/>
            <person name="Quail M.A."/>
            <person name="Rabbinowitsch E."/>
            <person name="Rutherford K.M."/>
            <person name="Rutter S."/>
            <person name="Saunders D."/>
            <person name="Seeger K."/>
            <person name="Sharp S."/>
            <person name="Skelton J."/>
            <person name="Simmonds M.N."/>
            <person name="Squares R."/>
            <person name="Squares S."/>
            <person name="Stevens K."/>
            <person name="Taylor K."/>
            <person name="Taylor R.G."/>
            <person name="Tivey A."/>
            <person name="Walsh S.V."/>
            <person name="Warren T."/>
            <person name="Whitehead S."/>
            <person name="Woodward J.R."/>
            <person name="Volckaert G."/>
            <person name="Aert R."/>
            <person name="Robben J."/>
            <person name="Grymonprez B."/>
            <person name="Weltjens I."/>
            <person name="Vanstreels E."/>
            <person name="Rieger M."/>
            <person name="Schaefer M."/>
            <person name="Mueller-Auer S."/>
            <person name="Gabel C."/>
            <person name="Fuchs M."/>
            <person name="Duesterhoeft A."/>
            <person name="Fritzc C."/>
            <person name="Holzer E."/>
            <person name="Moestl D."/>
            <person name="Hilbert H."/>
            <person name="Borzym K."/>
            <person name="Langer I."/>
            <person name="Beck A."/>
            <person name="Lehrach H."/>
            <person name="Reinhardt R."/>
            <person name="Pohl T.M."/>
            <person name="Eger P."/>
            <person name="Zimmermann W."/>
            <person name="Wedler H."/>
            <person name="Wambutt R."/>
            <person name="Purnelle B."/>
            <person name="Goffeau A."/>
            <person name="Cadieu E."/>
            <person name="Dreano S."/>
            <person name="Gloux S."/>
            <person name="Lelaure V."/>
            <person name="Mottier S."/>
            <person name="Galibert F."/>
            <person name="Aves S.J."/>
            <person name="Xiang Z."/>
            <person name="Hunt C."/>
            <person name="Moore K."/>
            <person name="Hurst S.M."/>
            <person name="Lucas M."/>
            <person name="Rochet M."/>
            <person name="Gaillardin C."/>
            <person name="Tallada V.A."/>
            <person name="Garzon A."/>
            <person name="Thode G."/>
            <person name="Daga R.R."/>
            <person name="Cruzado L."/>
            <person name="Jimenez J."/>
            <person name="Sanchez M."/>
            <person name="del Rey F."/>
            <person name="Benito J."/>
            <person name="Dominguez A."/>
            <person name="Revuelta J.L."/>
            <person name="Moreno S."/>
            <person name="Armstrong J."/>
            <person name="Forsburg S.L."/>
            <person name="Cerutti L."/>
            <person name="Lowe T."/>
            <person name="McCombie W.R."/>
            <person name="Paulsen I."/>
            <person name="Potashkin J."/>
            <person name="Shpakovski G.V."/>
            <person name="Ussery D."/>
            <person name="Barrell B.G."/>
            <person name="Nurse P."/>
        </authorList>
    </citation>
    <scope>NUCLEOTIDE SEQUENCE [LARGE SCALE GENOMIC DNA]</scope>
    <source>
        <strain>972 / ATCC 24843</strain>
    </source>
</reference>
<reference key="2">
    <citation type="journal article" date="2011" name="Science">
        <title>Comparative functional genomics of the fission yeasts.</title>
        <authorList>
            <person name="Rhind N."/>
            <person name="Chen Z."/>
            <person name="Yassour M."/>
            <person name="Thompson D.A."/>
            <person name="Haas B.J."/>
            <person name="Habib N."/>
            <person name="Wapinski I."/>
            <person name="Roy S."/>
            <person name="Lin M.F."/>
            <person name="Heiman D.I."/>
            <person name="Young S.K."/>
            <person name="Furuya K."/>
            <person name="Guo Y."/>
            <person name="Pidoux A."/>
            <person name="Chen H.M."/>
            <person name="Robbertse B."/>
            <person name="Goldberg J.M."/>
            <person name="Aoki K."/>
            <person name="Bayne E.H."/>
            <person name="Berlin A.M."/>
            <person name="Desjardins C.A."/>
            <person name="Dobbs E."/>
            <person name="Dukaj L."/>
            <person name="Fan L."/>
            <person name="FitzGerald M.G."/>
            <person name="French C."/>
            <person name="Gujja S."/>
            <person name="Hansen K."/>
            <person name="Keifenheim D."/>
            <person name="Levin J.Z."/>
            <person name="Mosher R.A."/>
            <person name="Mueller C.A."/>
            <person name="Pfiffner J."/>
            <person name="Priest M."/>
            <person name="Russ C."/>
            <person name="Smialowska A."/>
            <person name="Swoboda P."/>
            <person name="Sykes S.M."/>
            <person name="Vaughn M."/>
            <person name="Vengrova S."/>
            <person name="Yoder R."/>
            <person name="Zeng Q."/>
            <person name="Allshire R."/>
            <person name="Baulcombe D."/>
            <person name="Birren B.W."/>
            <person name="Brown W."/>
            <person name="Ekwall K."/>
            <person name="Kellis M."/>
            <person name="Leatherwood J."/>
            <person name="Levin H."/>
            <person name="Margalit H."/>
            <person name="Martienssen R."/>
            <person name="Nieduszynski C.A."/>
            <person name="Spatafora J.W."/>
            <person name="Friedman N."/>
            <person name="Dalgaard J.Z."/>
            <person name="Baumann P."/>
            <person name="Niki H."/>
            <person name="Regev A."/>
            <person name="Nusbaum C."/>
        </authorList>
    </citation>
    <scope>REVISION OF GENE MODEL</scope>
</reference>
<proteinExistence type="inferred from homology"/>
<accession>Q9HDW1</accession>
<organism>
    <name type="scientific">Schizosaccharomyces pombe (strain 972 / ATCC 24843)</name>
    <name type="common">Fission yeast</name>
    <dbReference type="NCBI Taxonomy" id="284812"/>
    <lineage>
        <taxon>Eukaryota</taxon>
        <taxon>Fungi</taxon>
        <taxon>Dikarya</taxon>
        <taxon>Ascomycota</taxon>
        <taxon>Taphrinomycotina</taxon>
        <taxon>Schizosaccharomycetes</taxon>
        <taxon>Schizosaccharomycetales</taxon>
        <taxon>Schizosaccharomycetaceae</taxon>
        <taxon>Schizosaccharomyces</taxon>
    </lineage>
</organism>